<protein>
    <recommendedName>
        <fullName>Mitochondrial 15S rRNA processing factor CCM1</fullName>
    </recommendedName>
    <alternativeName>
        <fullName>COB and COX1 mRNA maturation protein 1</fullName>
    </alternativeName>
    <alternativeName>
        <fullName>Degradation of mitochondrial rRNA protein 1</fullName>
    </alternativeName>
    <alternativeName>
        <fullName>Required for respiratory growth protein 2</fullName>
    </alternativeName>
</protein>
<reference key="1">
    <citation type="submission" date="2005-03" db="EMBL/GenBank/DDBJ databases">
        <title>Annotation of the Saccharomyces cerevisiae RM11-1a genome.</title>
        <authorList>
            <consortium name="The Broad Institute Genome Sequencing Platform"/>
            <person name="Birren B.W."/>
            <person name="Lander E.S."/>
            <person name="Galagan J.E."/>
            <person name="Nusbaum C."/>
            <person name="Devon K."/>
            <person name="Cuomo C."/>
            <person name="Jaffe D.B."/>
            <person name="Butler J."/>
            <person name="Alvarez P."/>
            <person name="Gnerre S."/>
            <person name="Grabherr M."/>
            <person name="Kleber M."/>
            <person name="Mauceli E.W."/>
            <person name="Brockman W."/>
            <person name="MacCallum I.A."/>
            <person name="Rounsley S."/>
            <person name="Young S.K."/>
            <person name="LaButti K."/>
            <person name="Pushparaj V."/>
            <person name="DeCaprio D."/>
            <person name="Crawford M."/>
            <person name="Koehrsen M."/>
            <person name="Engels R."/>
            <person name="Montgomery P."/>
            <person name="Pearson M."/>
            <person name="Howarth C."/>
            <person name="Larson L."/>
            <person name="Luoma S."/>
            <person name="White J."/>
            <person name="O'Leary S."/>
            <person name="Kodira C.D."/>
            <person name="Zeng Q."/>
            <person name="Yandava C."/>
            <person name="Alvarado L."/>
            <person name="Pratt S."/>
            <person name="Kruglyak L."/>
        </authorList>
    </citation>
    <scope>NUCLEOTIDE SEQUENCE [LARGE SCALE GENOMIC DNA]</scope>
    <source>
        <strain>RM11-1a</strain>
    </source>
</reference>
<gene>
    <name type="primary">CCM1</name>
    <name type="synonym">DMR1</name>
    <name type="synonym">RRG2</name>
    <name type="ORF">SCRG_00869</name>
</gene>
<proteinExistence type="inferred from homology"/>
<feature type="transit peptide" description="Mitochondrion" evidence="2">
    <location>
        <begin position="1"/>
        <end position="76"/>
    </location>
</feature>
<feature type="chain" id="PRO_0000402271" description="Mitochondrial 15S rRNA processing factor CCM1" evidence="2">
    <location>
        <begin position="77"/>
        <end position="864"/>
    </location>
</feature>
<feature type="repeat" description="PPR 1" evidence="3">
    <location>
        <begin position="319"/>
        <end position="353"/>
    </location>
</feature>
<feature type="repeat" description="PPR 2" evidence="3">
    <location>
        <begin position="356"/>
        <end position="390"/>
    </location>
</feature>
<keyword id="KW-0496">Mitochondrion</keyword>
<keyword id="KW-0507">mRNA processing</keyword>
<keyword id="KW-0508">mRNA splicing</keyword>
<keyword id="KW-0677">Repeat</keyword>
<keyword id="KW-0809">Transit peptide</keyword>
<name>CCM1_YEAS1</name>
<sequence>MYMARCGPKNNVLCFPFQLSFLFSKRLINKRFKYTLQTEDEKNMMGSLSKNKIITPEDVEFKLAQLREFSNTLKERIHNTKSVNSDGHQSNSIAPISEDSRNVNVTKISSVPNEEKSKNLSDLIHSSFLEKMDHLVPKVIRERVADDDILAKNLFDRSHSNWAPVIDRLYVSEKRFMDIDSREFSVWLNGTVKYLPFHSILHLDEMLLEQINGDVVKFNTHMYECIFNNLGNLKPTNFNQDGTNDKVILKMKELLERYDKALKITEERINKKEGFPSKVPKMTQAILNNCLKYSTKCSSFHDMDYFITKFRDDYGITPNKQNLTTVIQFYSRKEMTKQAWNTFDTMKFLSTKHFPDICTYNTMLRICEKERNFPKALDLFQEIQDHNIKPTTNTYIMMARVLASSSSNAVVSEGKSDSLRLLGWKYLHELEDKNLYRHKKDDLNLFLAMMALAAFDGDIELSRALYYLFIAKKYKTLCANWKGNILVDQDTIWKSTLMPEMLNYLMLAYARFDPRNLPVLSGYEKGIELRRKFLREFDSSMRLDDTDKLVKFKLPFLPISDLNSEAQVLAESNAIWSFNLENGGTRNTLTSSNEAALEDIKKYRQLLDSFAQEAEDFNEFKFKVMYEVTKMQRESINVNVFNKISLHTYLSIPINLKQQKEFLRRLTFFTFQQHEFEAVIKRLYEGYRNIPSSHTRDQNSISTEAISVSKPETTEDLNLIMHDIWYITCLRHKIMMDTTLYELVMKAAIEFQNEDLAKKVWNDRGKFRTTVPFLKMDQRIRIAKDQKFAHLMVEFFTKQGKYSDAIAIILSSKNRFNWTYSMVRNLHKALEEIEDRNSVEILLDVVNKKSHAKALKWEEQELNM</sequence>
<evidence type="ECO:0000250" key="1">
    <source>
        <dbReference type="UniProtKB" id="P48237"/>
    </source>
</evidence>
<evidence type="ECO:0000255" key="2"/>
<evidence type="ECO:0000255" key="3">
    <source>
        <dbReference type="PROSITE-ProRule" id="PRU00708"/>
    </source>
</evidence>
<evidence type="ECO:0000305" key="4"/>
<accession>B3LI79</accession>
<organism>
    <name type="scientific">Saccharomyces cerevisiae (strain RM11-1a)</name>
    <name type="common">Baker's yeast</name>
    <dbReference type="NCBI Taxonomy" id="285006"/>
    <lineage>
        <taxon>Eukaryota</taxon>
        <taxon>Fungi</taxon>
        <taxon>Dikarya</taxon>
        <taxon>Ascomycota</taxon>
        <taxon>Saccharomycotina</taxon>
        <taxon>Saccharomycetes</taxon>
        <taxon>Saccharomycetales</taxon>
        <taxon>Saccharomycetaceae</taxon>
        <taxon>Saccharomyces</taxon>
    </lineage>
</organism>
<comment type="function">
    <text evidence="1">Regulates mitochondrial small subunit maturation by controlling 15S rRNA 5'-end processing. Localizes to the 5' precursor of the 15S rRNA in a position that is subsequently occupied by mS47 in the mature yeast mtSSU. Uses structure and sequence-specific RNA recognition, binding to a single-stranded region of the precursor and specifically recognizing bases -6 to -1. The exchange of Ccm1 for mS47 is coupled to the irreversible removal of precursor rRNA that is accompanied by conformational changes of the mitoribosomal proteins uS5m and mS26. These conformational changes signal completion of 5'-end rRNA processing through protection of the mature 5'-end of the 15S rRNA and stabilization of mS47. The removal of the 5' precursor together with the dissociation of Ccm1 may be catalyzed by the 5'-3' exoribonuclease Pet127. Involved in the specific removal of group I introns in mitochondrial encoded transcripts.</text>
</comment>
<comment type="subunit">
    <text evidence="1">Binds to mitochondrial small subunit 15S rRNA.</text>
</comment>
<comment type="subcellular location">
    <subcellularLocation>
        <location evidence="1">Mitochondrion</location>
    </subcellularLocation>
</comment>
<comment type="miscellaneous">
    <text evidence="1">Involved in mitochondrial-nuclear incompatibility, a major determinant in reproductive isolation between species, through hybrid incompatibility of Ccm1 and its interacting partner 15S rRNA between yeast species.</text>
</comment>
<comment type="similarity">
    <text evidence="4">Belongs to the CCM1 family.</text>
</comment>
<dbReference type="EMBL" id="CH408044">
    <property type="protein sequence ID" value="EDV10100.1"/>
    <property type="molecule type" value="Genomic_DNA"/>
</dbReference>
<dbReference type="SMR" id="B3LI79"/>
<dbReference type="HOGENOM" id="CLU_334653_0_0_1"/>
<dbReference type="OrthoDB" id="41177at4893"/>
<dbReference type="Proteomes" id="UP000008335">
    <property type="component" value="Unassembled WGS sequence"/>
</dbReference>
<dbReference type="GO" id="GO:0005739">
    <property type="term" value="C:mitochondrion"/>
    <property type="evidence" value="ECO:0007669"/>
    <property type="project" value="UniProtKB-SubCell"/>
</dbReference>
<dbReference type="GO" id="GO:0031930">
    <property type="term" value="P:mitochondria-nucleus signaling pathway"/>
    <property type="evidence" value="ECO:0007669"/>
    <property type="project" value="TreeGrafter"/>
</dbReference>
<dbReference type="GO" id="GO:0006397">
    <property type="term" value="P:mRNA processing"/>
    <property type="evidence" value="ECO:0007669"/>
    <property type="project" value="UniProtKB-KW"/>
</dbReference>
<dbReference type="GO" id="GO:0008380">
    <property type="term" value="P:RNA splicing"/>
    <property type="evidence" value="ECO:0007669"/>
    <property type="project" value="UniProtKB-KW"/>
</dbReference>
<dbReference type="Gene3D" id="1.25.40.10">
    <property type="entry name" value="Tetratricopeptide repeat domain"/>
    <property type="match status" value="1"/>
</dbReference>
<dbReference type="InterPro" id="IPR002885">
    <property type="entry name" value="Pentatricopeptide_rpt"/>
</dbReference>
<dbReference type="InterPro" id="IPR011990">
    <property type="entry name" value="TPR-like_helical_dom_sf"/>
</dbReference>
<dbReference type="NCBIfam" id="TIGR00756">
    <property type="entry name" value="PPR"/>
    <property type="match status" value="1"/>
</dbReference>
<dbReference type="PANTHER" id="PTHR47936:SF1">
    <property type="entry name" value="PENTATRICOPEPTIDE REPEAT-CONTAINING PROTEIN GUN1, CHLOROPLASTIC"/>
    <property type="match status" value="1"/>
</dbReference>
<dbReference type="PANTHER" id="PTHR47936">
    <property type="entry name" value="PPR_LONG DOMAIN-CONTAINING PROTEIN"/>
    <property type="match status" value="1"/>
</dbReference>
<dbReference type="Pfam" id="PF13041">
    <property type="entry name" value="PPR_2"/>
    <property type="match status" value="1"/>
</dbReference>
<dbReference type="PROSITE" id="PS51375">
    <property type="entry name" value="PPR"/>
    <property type="match status" value="2"/>
</dbReference>